<reference key="1">
    <citation type="journal article" date="2006" name="Nat. Biotechnol.">
        <title>The genome and transcriptomes of the anti-tumor agent Clostridium novyi-NT.</title>
        <authorList>
            <person name="Bettegowda C."/>
            <person name="Huang X."/>
            <person name="Lin J."/>
            <person name="Cheong I."/>
            <person name="Kohli M."/>
            <person name="Szabo S.A."/>
            <person name="Zhang X."/>
            <person name="Diaz L.A. Jr."/>
            <person name="Velculescu V.E."/>
            <person name="Parmigiani G."/>
            <person name="Kinzler K.W."/>
            <person name="Vogelstein B."/>
            <person name="Zhou S."/>
        </authorList>
    </citation>
    <scope>NUCLEOTIDE SEQUENCE [LARGE SCALE GENOMIC DNA]</scope>
    <source>
        <strain>NT</strain>
    </source>
</reference>
<sequence length="146" mass="15570">MKLHELRPAEGSKKAPKRVGRGNGSGLGKTAGKGHKGQNARSGGGVRPGFEGGQMPLYRRLPKRGFTNIFAKEYVEVNVSRLNIFEDGTEVTPEVLKANGVISKVKDGVKILGNGTLEKKLTIKATKFTKGAVEKIESIGGKAEVI</sequence>
<evidence type="ECO:0000255" key="1">
    <source>
        <dbReference type="HAMAP-Rule" id="MF_01341"/>
    </source>
</evidence>
<evidence type="ECO:0000256" key="2">
    <source>
        <dbReference type="SAM" id="MobiDB-lite"/>
    </source>
</evidence>
<evidence type="ECO:0000305" key="3"/>
<accession>A0PXW5</accession>
<comment type="function">
    <text evidence="1">Binds to the 23S rRNA.</text>
</comment>
<comment type="subunit">
    <text evidence="1">Part of the 50S ribosomal subunit.</text>
</comment>
<comment type="similarity">
    <text evidence="1">Belongs to the universal ribosomal protein uL15 family.</text>
</comment>
<name>RL15_CLONN</name>
<gene>
    <name evidence="1" type="primary">rplO</name>
    <name type="ordered locus">NT01CX_1134</name>
</gene>
<protein>
    <recommendedName>
        <fullName evidence="1">Large ribosomal subunit protein uL15</fullName>
    </recommendedName>
    <alternativeName>
        <fullName evidence="3">50S ribosomal protein L15</fullName>
    </alternativeName>
</protein>
<keyword id="KW-1185">Reference proteome</keyword>
<keyword id="KW-0687">Ribonucleoprotein</keyword>
<keyword id="KW-0689">Ribosomal protein</keyword>
<keyword id="KW-0694">RNA-binding</keyword>
<keyword id="KW-0699">rRNA-binding</keyword>
<feature type="chain" id="PRO_1000054452" description="Large ribosomal subunit protein uL15">
    <location>
        <begin position="1"/>
        <end position="146"/>
    </location>
</feature>
<feature type="region of interest" description="Disordered" evidence="2">
    <location>
        <begin position="1"/>
        <end position="54"/>
    </location>
</feature>
<feature type="compositionally biased region" description="Basic and acidic residues" evidence="2">
    <location>
        <begin position="1"/>
        <end position="13"/>
    </location>
</feature>
<feature type="compositionally biased region" description="Gly residues" evidence="2">
    <location>
        <begin position="21"/>
        <end position="31"/>
    </location>
</feature>
<feature type="compositionally biased region" description="Gly residues" evidence="2">
    <location>
        <begin position="42"/>
        <end position="52"/>
    </location>
</feature>
<organism>
    <name type="scientific">Clostridium novyi (strain NT)</name>
    <dbReference type="NCBI Taxonomy" id="386415"/>
    <lineage>
        <taxon>Bacteria</taxon>
        <taxon>Bacillati</taxon>
        <taxon>Bacillota</taxon>
        <taxon>Clostridia</taxon>
        <taxon>Eubacteriales</taxon>
        <taxon>Clostridiaceae</taxon>
        <taxon>Clostridium</taxon>
    </lineage>
</organism>
<dbReference type="EMBL" id="CP000382">
    <property type="protein sequence ID" value="ABK61160.1"/>
    <property type="molecule type" value="Genomic_DNA"/>
</dbReference>
<dbReference type="RefSeq" id="WP_011721229.1">
    <property type="nucleotide sequence ID" value="NC_008593.1"/>
</dbReference>
<dbReference type="SMR" id="A0PXW5"/>
<dbReference type="STRING" id="386415.NT01CX_1134"/>
<dbReference type="KEGG" id="cno:NT01CX_1134"/>
<dbReference type="eggNOG" id="COG0200">
    <property type="taxonomic scope" value="Bacteria"/>
</dbReference>
<dbReference type="HOGENOM" id="CLU_055188_4_2_9"/>
<dbReference type="Proteomes" id="UP000008220">
    <property type="component" value="Chromosome"/>
</dbReference>
<dbReference type="GO" id="GO:0022625">
    <property type="term" value="C:cytosolic large ribosomal subunit"/>
    <property type="evidence" value="ECO:0007669"/>
    <property type="project" value="TreeGrafter"/>
</dbReference>
<dbReference type="GO" id="GO:0019843">
    <property type="term" value="F:rRNA binding"/>
    <property type="evidence" value="ECO:0007669"/>
    <property type="project" value="UniProtKB-UniRule"/>
</dbReference>
<dbReference type="GO" id="GO:0003735">
    <property type="term" value="F:structural constituent of ribosome"/>
    <property type="evidence" value="ECO:0007669"/>
    <property type="project" value="InterPro"/>
</dbReference>
<dbReference type="GO" id="GO:0006412">
    <property type="term" value="P:translation"/>
    <property type="evidence" value="ECO:0007669"/>
    <property type="project" value="UniProtKB-UniRule"/>
</dbReference>
<dbReference type="Gene3D" id="3.100.10.10">
    <property type="match status" value="1"/>
</dbReference>
<dbReference type="HAMAP" id="MF_01341">
    <property type="entry name" value="Ribosomal_uL15"/>
    <property type="match status" value="1"/>
</dbReference>
<dbReference type="InterPro" id="IPR030878">
    <property type="entry name" value="Ribosomal_uL15"/>
</dbReference>
<dbReference type="InterPro" id="IPR021131">
    <property type="entry name" value="Ribosomal_uL15/eL18"/>
</dbReference>
<dbReference type="InterPro" id="IPR036227">
    <property type="entry name" value="Ribosomal_uL15/eL18_sf"/>
</dbReference>
<dbReference type="InterPro" id="IPR005749">
    <property type="entry name" value="Ribosomal_uL15_bac-type"/>
</dbReference>
<dbReference type="InterPro" id="IPR001196">
    <property type="entry name" value="Ribosomal_uL15_CS"/>
</dbReference>
<dbReference type="NCBIfam" id="TIGR01071">
    <property type="entry name" value="rplO_bact"/>
    <property type="match status" value="1"/>
</dbReference>
<dbReference type="PANTHER" id="PTHR12934">
    <property type="entry name" value="50S RIBOSOMAL PROTEIN L15"/>
    <property type="match status" value="1"/>
</dbReference>
<dbReference type="PANTHER" id="PTHR12934:SF11">
    <property type="entry name" value="LARGE RIBOSOMAL SUBUNIT PROTEIN UL15M"/>
    <property type="match status" value="1"/>
</dbReference>
<dbReference type="Pfam" id="PF00828">
    <property type="entry name" value="Ribosomal_L27A"/>
    <property type="match status" value="1"/>
</dbReference>
<dbReference type="SUPFAM" id="SSF52080">
    <property type="entry name" value="Ribosomal proteins L15p and L18e"/>
    <property type="match status" value="1"/>
</dbReference>
<dbReference type="PROSITE" id="PS00475">
    <property type="entry name" value="RIBOSOMAL_L15"/>
    <property type="match status" value="1"/>
</dbReference>
<proteinExistence type="inferred from homology"/>